<accession>Q03R37</accession>
<proteinExistence type="inferred from homology"/>
<keyword id="KW-0963">Cytoplasm</keyword>
<keyword id="KW-0671">Queuosine biosynthesis</keyword>
<keyword id="KW-1185">Reference proteome</keyword>
<keyword id="KW-0949">S-adenosyl-L-methionine</keyword>
<keyword id="KW-0808">Transferase</keyword>
<comment type="function">
    <text evidence="1">Transfers and isomerizes the ribose moiety from AdoMet to the 7-aminomethyl group of 7-deazaguanine (preQ1-tRNA) to give epoxyqueuosine (oQ-tRNA).</text>
</comment>
<comment type="catalytic activity">
    <reaction evidence="1">
        <text>7-aminomethyl-7-carbaguanosine(34) in tRNA + S-adenosyl-L-methionine = epoxyqueuosine(34) in tRNA + adenine + L-methionine + 2 H(+)</text>
        <dbReference type="Rhea" id="RHEA:32155"/>
        <dbReference type="Rhea" id="RHEA-COMP:10342"/>
        <dbReference type="Rhea" id="RHEA-COMP:18582"/>
        <dbReference type="ChEBI" id="CHEBI:15378"/>
        <dbReference type="ChEBI" id="CHEBI:16708"/>
        <dbReference type="ChEBI" id="CHEBI:57844"/>
        <dbReference type="ChEBI" id="CHEBI:59789"/>
        <dbReference type="ChEBI" id="CHEBI:82833"/>
        <dbReference type="ChEBI" id="CHEBI:194443"/>
        <dbReference type="EC" id="2.4.99.17"/>
    </reaction>
</comment>
<comment type="pathway">
    <text evidence="1">tRNA modification; tRNA-queuosine biosynthesis.</text>
</comment>
<comment type="subunit">
    <text evidence="1">Monomer.</text>
</comment>
<comment type="subcellular location">
    <subcellularLocation>
        <location evidence="1">Cytoplasm</location>
    </subcellularLocation>
</comment>
<comment type="similarity">
    <text evidence="1">Belongs to the QueA family.</text>
</comment>
<name>QUEA_LEVBA</name>
<dbReference type="EC" id="2.4.99.17" evidence="1"/>
<dbReference type="EMBL" id="CP000416">
    <property type="protein sequence ID" value="ABJ64335.1"/>
    <property type="molecule type" value="Genomic_DNA"/>
</dbReference>
<dbReference type="RefSeq" id="WP_011667965.1">
    <property type="nucleotide sequence ID" value="NC_008497.1"/>
</dbReference>
<dbReference type="SMR" id="Q03R37"/>
<dbReference type="STRING" id="387344.LVIS_1229"/>
<dbReference type="KEGG" id="lbr:LVIS_1229"/>
<dbReference type="eggNOG" id="COG0809">
    <property type="taxonomic scope" value="Bacteria"/>
</dbReference>
<dbReference type="HOGENOM" id="CLU_039110_1_0_9"/>
<dbReference type="UniPathway" id="UPA00392"/>
<dbReference type="Proteomes" id="UP000001652">
    <property type="component" value="Chromosome"/>
</dbReference>
<dbReference type="GO" id="GO:0005737">
    <property type="term" value="C:cytoplasm"/>
    <property type="evidence" value="ECO:0007669"/>
    <property type="project" value="UniProtKB-SubCell"/>
</dbReference>
<dbReference type="GO" id="GO:0051075">
    <property type="term" value="F:S-adenosylmethionine:tRNA ribosyltransferase-isomerase activity"/>
    <property type="evidence" value="ECO:0007669"/>
    <property type="project" value="UniProtKB-EC"/>
</dbReference>
<dbReference type="GO" id="GO:0008616">
    <property type="term" value="P:queuosine biosynthetic process"/>
    <property type="evidence" value="ECO:0007669"/>
    <property type="project" value="UniProtKB-UniRule"/>
</dbReference>
<dbReference type="GO" id="GO:0002099">
    <property type="term" value="P:tRNA wobble guanine modification"/>
    <property type="evidence" value="ECO:0007669"/>
    <property type="project" value="TreeGrafter"/>
</dbReference>
<dbReference type="FunFam" id="2.40.10.240:FF:000002">
    <property type="entry name" value="S-adenosylmethionine:tRNA ribosyltransferase-isomerase"/>
    <property type="match status" value="1"/>
</dbReference>
<dbReference type="FunFam" id="3.40.1780.10:FF:000001">
    <property type="entry name" value="S-adenosylmethionine:tRNA ribosyltransferase-isomerase"/>
    <property type="match status" value="1"/>
</dbReference>
<dbReference type="Gene3D" id="2.40.10.240">
    <property type="entry name" value="QueA-like"/>
    <property type="match status" value="1"/>
</dbReference>
<dbReference type="Gene3D" id="3.40.1780.10">
    <property type="entry name" value="QueA-like"/>
    <property type="match status" value="1"/>
</dbReference>
<dbReference type="HAMAP" id="MF_00113">
    <property type="entry name" value="QueA"/>
    <property type="match status" value="1"/>
</dbReference>
<dbReference type="InterPro" id="IPR003699">
    <property type="entry name" value="QueA"/>
</dbReference>
<dbReference type="InterPro" id="IPR042118">
    <property type="entry name" value="QueA_dom1"/>
</dbReference>
<dbReference type="InterPro" id="IPR042119">
    <property type="entry name" value="QueA_dom2"/>
</dbReference>
<dbReference type="InterPro" id="IPR036100">
    <property type="entry name" value="QueA_sf"/>
</dbReference>
<dbReference type="NCBIfam" id="NF001140">
    <property type="entry name" value="PRK00147.1"/>
    <property type="match status" value="1"/>
</dbReference>
<dbReference type="NCBIfam" id="TIGR00113">
    <property type="entry name" value="queA"/>
    <property type="match status" value="1"/>
</dbReference>
<dbReference type="PANTHER" id="PTHR30307">
    <property type="entry name" value="S-ADENOSYLMETHIONINE:TRNA RIBOSYLTRANSFERASE-ISOMERASE"/>
    <property type="match status" value="1"/>
</dbReference>
<dbReference type="PANTHER" id="PTHR30307:SF0">
    <property type="entry name" value="S-ADENOSYLMETHIONINE:TRNA RIBOSYLTRANSFERASE-ISOMERASE"/>
    <property type="match status" value="1"/>
</dbReference>
<dbReference type="Pfam" id="PF02547">
    <property type="entry name" value="Queuosine_synth"/>
    <property type="match status" value="1"/>
</dbReference>
<dbReference type="SUPFAM" id="SSF111337">
    <property type="entry name" value="QueA-like"/>
    <property type="match status" value="1"/>
</dbReference>
<sequence>MAYTLDDFDYDLPHELIAQTPIKQRDTSRLLVLDHQANTLEDKHFYDILDELHAGDAVVMNNSRVMPARLYGIKPETGGHVEVLLLHNVEGDVWETLMKPAKRLRVGTTVTFGDGQLTATVTEEREDGIRLIEFHYDGIFMEILEQLGETPLPPYIKEKLDDPDRYQTVYAKENGSAAAPTAGLHWTQELLDQVAAKGVKLVYITLHVGLGTFRPVEEANIEDHKMHSEFYRLDEAAAATLNEVRANGGRIIATGTTSIRTLETIGTKFKGEIKPDSGWTDIFIKPGYQWQVVNAFITNFHLPKSTLVMLVAAFTGRDQILNAYHHAIEEKYRFFSFGDAMFIK</sequence>
<feature type="chain" id="PRO_1000015229" description="S-adenosylmethionine:tRNA ribosyltransferase-isomerase">
    <location>
        <begin position="1"/>
        <end position="344"/>
    </location>
</feature>
<gene>
    <name evidence="1" type="primary">queA</name>
    <name type="ordered locus">LVIS_1229</name>
</gene>
<reference key="1">
    <citation type="journal article" date="2006" name="Proc. Natl. Acad. Sci. U.S.A.">
        <title>Comparative genomics of the lactic acid bacteria.</title>
        <authorList>
            <person name="Makarova K.S."/>
            <person name="Slesarev A."/>
            <person name="Wolf Y.I."/>
            <person name="Sorokin A."/>
            <person name="Mirkin B."/>
            <person name="Koonin E.V."/>
            <person name="Pavlov A."/>
            <person name="Pavlova N."/>
            <person name="Karamychev V."/>
            <person name="Polouchine N."/>
            <person name="Shakhova V."/>
            <person name="Grigoriev I."/>
            <person name="Lou Y."/>
            <person name="Rohksar D."/>
            <person name="Lucas S."/>
            <person name="Huang K."/>
            <person name="Goodstein D.M."/>
            <person name="Hawkins T."/>
            <person name="Plengvidhya V."/>
            <person name="Welker D."/>
            <person name="Hughes J."/>
            <person name="Goh Y."/>
            <person name="Benson A."/>
            <person name="Baldwin K."/>
            <person name="Lee J.-H."/>
            <person name="Diaz-Muniz I."/>
            <person name="Dosti B."/>
            <person name="Smeianov V."/>
            <person name="Wechter W."/>
            <person name="Barabote R."/>
            <person name="Lorca G."/>
            <person name="Altermann E."/>
            <person name="Barrangou R."/>
            <person name="Ganesan B."/>
            <person name="Xie Y."/>
            <person name="Rawsthorne H."/>
            <person name="Tamir D."/>
            <person name="Parker C."/>
            <person name="Breidt F."/>
            <person name="Broadbent J.R."/>
            <person name="Hutkins R."/>
            <person name="O'Sullivan D."/>
            <person name="Steele J."/>
            <person name="Unlu G."/>
            <person name="Saier M.H. Jr."/>
            <person name="Klaenhammer T."/>
            <person name="Richardson P."/>
            <person name="Kozyavkin S."/>
            <person name="Weimer B.C."/>
            <person name="Mills D.A."/>
        </authorList>
    </citation>
    <scope>NUCLEOTIDE SEQUENCE [LARGE SCALE GENOMIC DNA]</scope>
    <source>
        <strain>ATCC 367 / BCRC 12310 / CIP 105137 / JCM 1170 / LMG 11437 / NCIMB 947 / NCTC 947</strain>
    </source>
</reference>
<evidence type="ECO:0000255" key="1">
    <source>
        <dbReference type="HAMAP-Rule" id="MF_00113"/>
    </source>
</evidence>
<protein>
    <recommendedName>
        <fullName evidence="1">S-adenosylmethionine:tRNA ribosyltransferase-isomerase</fullName>
        <ecNumber evidence="1">2.4.99.17</ecNumber>
    </recommendedName>
    <alternativeName>
        <fullName evidence="1">Queuosine biosynthesis protein QueA</fullName>
    </alternativeName>
</protein>
<organism>
    <name type="scientific">Levilactobacillus brevis (strain ATCC 367 / BCRC 12310 / CIP 105137 / JCM 1170 / LMG 11437 / NCIMB 947 / NCTC 947)</name>
    <name type="common">Lactobacillus brevis</name>
    <dbReference type="NCBI Taxonomy" id="387344"/>
    <lineage>
        <taxon>Bacteria</taxon>
        <taxon>Bacillati</taxon>
        <taxon>Bacillota</taxon>
        <taxon>Bacilli</taxon>
        <taxon>Lactobacillales</taxon>
        <taxon>Lactobacillaceae</taxon>
        <taxon>Levilactobacillus</taxon>
    </lineage>
</organism>